<accession>A0A0D1C8C8</accession>
<comment type="function">
    <text evidence="3">Effector protein involved in the induction of tumors in infected plant tissues by the fungus. Required for the reactivation of plant DNA synthesis, which is crucial for tumor progression in leaf cells. Interferes with the MAPK-triggered phosphorylation of maize SGT1 at a monocot-specific phosphorylation site, resulting in both modulation of immune responses and reactivation of DNA synthesis during leaf tumor formation.</text>
</comment>
<comment type="subunit">
    <text evidence="3">Interacts with a maize homolog of SGT1, a factor acting in cell cycle progression in yeast Saccharomyces cerevisiae and an important component of plant and human innate immunity.</text>
</comment>
<comment type="subcellular location">
    <subcellularLocation>
        <location evidence="3">Secreted</location>
    </subcellularLocation>
    <subcellularLocation>
        <location evidence="3">Host cytoplasm</location>
    </subcellularLocation>
    <subcellularLocation>
        <location evidence="3">Host nucleus</location>
    </subcellularLocation>
</comment>
<dbReference type="EMBL" id="CM003144">
    <property type="protein sequence ID" value="KIS69712.1"/>
    <property type="molecule type" value="Genomic_DNA"/>
</dbReference>
<dbReference type="RefSeq" id="XP_011388579.1">
    <property type="nucleotide sequence ID" value="XM_011390277.1"/>
</dbReference>
<dbReference type="SMR" id="A0A0D1C8C8"/>
<dbReference type="STRING" id="237631.A0A0D1C8C8"/>
<dbReference type="EnsemblFungi" id="KIS69712">
    <property type="protein sequence ID" value="KIS69712"/>
    <property type="gene ID" value="UMAG_02239"/>
</dbReference>
<dbReference type="GeneID" id="23563038"/>
<dbReference type="KEGG" id="uma:UMAG_02239"/>
<dbReference type="VEuPathDB" id="FungiDB:UMAG_02239"/>
<dbReference type="eggNOG" id="ENOG502RDT6">
    <property type="taxonomic scope" value="Eukaryota"/>
</dbReference>
<dbReference type="InParanoid" id="A0A0D1C8C8"/>
<dbReference type="OrthoDB" id="2556705at2759"/>
<dbReference type="Proteomes" id="UP000000561">
    <property type="component" value="Chromosome 5"/>
</dbReference>
<dbReference type="GO" id="GO:0005576">
    <property type="term" value="C:extracellular region"/>
    <property type="evidence" value="ECO:0007669"/>
    <property type="project" value="UniProtKB-SubCell"/>
</dbReference>
<dbReference type="GO" id="GO:0030430">
    <property type="term" value="C:host cell cytoplasm"/>
    <property type="evidence" value="ECO:0000269"/>
    <property type="project" value="PHI-base"/>
</dbReference>
<dbReference type="GO" id="GO:0042025">
    <property type="term" value="C:host cell nucleus"/>
    <property type="evidence" value="ECO:0000269"/>
    <property type="project" value="PHI-base"/>
</dbReference>
<dbReference type="GO" id="GO:0141017">
    <property type="term" value="P:effector-mediated induction of cell cycle reactivation in host"/>
    <property type="evidence" value="ECO:0000314"/>
    <property type="project" value="PHI-base"/>
</dbReference>
<keyword id="KW-1035">Host cytoplasm</keyword>
<keyword id="KW-1048">Host nucleus</keyword>
<keyword id="KW-1185">Reference proteome</keyword>
<keyword id="KW-0964">Secreted</keyword>
<keyword id="KW-0732">Signal</keyword>
<reference key="1">
    <citation type="journal article" date="2006" name="Nature">
        <title>Insights from the genome of the biotrophic fungal plant pathogen Ustilago maydis.</title>
        <authorList>
            <person name="Kaemper J."/>
            <person name="Kahmann R."/>
            <person name="Boelker M."/>
            <person name="Ma L.-J."/>
            <person name="Brefort T."/>
            <person name="Saville B.J."/>
            <person name="Banuett F."/>
            <person name="Kronstad J.W."/>
            <person name="Gold S.E."/>
            <person name="Mueller O."/>
            <person name="Perlin M.H."/>
            <person name="Woesten H.A.B."/>
            <person name="de Vries R."/>
            <person name="Ruiz-Herrera J."/>
            <person name="Reynaga-Pena C.G."/>
            <person name="Snetselaar K."/>
            <person name="McCann M."/>
            <person name="Perez-Martin J."/>
            <person name="Feldbruegge M."/>
            <person name="Basse C.W."/>
            <person name="Steinberg G."/>
            <person name="Ibeas J.I."/>
            <person name="Holloman W."/>
            <person name="Guzman P."/>
            <person name="Farman M.L."/>
            <person name="Stajich J.E."/>
            <person name="Sentandreu R."/>
            <person name="Gonzalez-Prieto J.M."/>
            <person name="Kennell J.C."/>
            <person name="Molina L."/>
            <person name="Schirawski J."/>
            <person name="Mendoza-Mendoza A."/>
            <person name="Greilinger D."/>
            <person name="Muench K."/>
            <person name="Roessel N."/>
            <person name="Scherer M."/>
            <person name="Vranes M."/>
            <person name="Ladendorf O."/>
            <person name="Vincon V."/>
            <person name="Fuchs U."/>
            <person name="Sandrock B."/>
            <person name="Meng S."/>
            <person name="Ho E.C.H."/>
            <person name="Cahill M.J."/>
            <person name="Boyce K.J."/>
            <person name="Klose J."/>
            <person name="Klosterman S.J."/>
            <person name="Deelstra H.J."/>
            <person name="Ortiz-Castellanos L."/>
            <person name="Li W."/>
            <person name="Sanchez-Alonso P."/>
            <person name="Schreier P.H."/>
            <person name="Haeuser-Hahn I."/>
            <person name="Vaupel M."/>
            <person name="Koopmann E."/>
            <person name="Friedrich G."/>
            <person name="Voss H."/>
            <person name="Schlueter T."/>
            <person name="Margolis J."/>
            <person name="Platt D."/>
            <person name="Swimmer C."/>
            <person name="Gnirke A."/>
            <person name="Chen F."/>
            <person name="Vysotskaia V."/>
            <person name="Mannhaupt G."/>
            <person name="Gueldener U."/>
            <person name="Muensterkoetter M."/>
            <person name="Haase D."/>
            <person name="Oesterheld M."/>
            <person name="Mewes H.-W."/>
            <person name="Mauceli E.W."/>
            <person name="DeCaprio D."/>
            <person name="Wade C.M."/>
            <person name="Butler J."/>
            <person name="Young S.K."/>
            <person name="Jaffe D.B."/>
            <person name="Calvo S.E."/>
            <person name="Nusbaum C."/>
            <person name="Galagan J.E."/>
            <person name="Birren B.W."/>
        </authorList>
    </citation>
    <scope>NUCLEOTIDE SEQUENCE [LARGE SCALE GENOMIC DNA]</scope>
    <source>
        <strain>DSM 14603 / FGSC 9021 / UM521</strain>
    </source>
</reference>
<reference key="2">
    <citation type="submission" date="2014-09" db="EMBL/GenBank/DDBJ databases">
        <authorList>
            <person name="Gueldener U."/>
            <person name="Muensterkoetter M."/>
            <person name="Walter M.C."/>
            <person name="Mannhaupt G."/>
            <person name="Kahmann R."/>
        </authorList>
    </citation>
    <scope>GENOME REANNOTATION</scope>
    <source>
        <strain>DSM 14603 / FGSC 9021 / UM521</strain>
    </source>
</reference>
<reference key="3">
    <citation type="journal article" date="2015" name="Plant Cell">
        <title>A secreted effector protein of Ustilago maydis guides maize leaf cells to form tumors.</title>
        <authorList>
            <person name="Redkar A."/>
            <person name="Hoser R."/>
            <person name="Schilling L."/>
            <person name="Zechmann B."/>
            <person name="Krzymowska M."/>
            <person name="Walbot V."/>
            <person name="Doehlemann G."/>
        </authorList>
    </citation>
    <scope>FUNCTION</scope>
    <scope>SUBCELLULAR LOCATION</scope>
    <scope>SUBUNIT</scope>
</reference>
<evidence type="ECO:0000255" key="1"/>
<evidence type="ECO:0000256" key="2">
    <source>
        <dbReference type="SAM" id="MobiDB-lite"/>
    </source>
</evidence>
<evidence type="ECO:0000269" key="3">
    <source>
    </source>
</evidence>
<evidence type="ECO:0000303" key="4">
    <source>
    </source>
</evidence>
<evidence type="ECO:0000305" key="5"/>
<evidence type="ECO:0000312" key="6">
    <source>
        <dbReference type="EMBL" id="KIS69712.1"/>
    </source>
</evidence>
<gene>
    <name evidence="4" type="primary">See1</name>
    <name evidence="6" type="ORF">UMAG_02239</name>
</gene>
<proteinExistence type="evidence at protein level"/>
<sequence length="157" mass="17730">MLFTTFVSLLLVILCLVHVSAHPLQSFRSSSAIGKQKHKIKSRQFEEEIAQGAEDSIELFEFPRVHDSSEQIHERTEQQNITTKNIILAINKNSRKHGGLHRLPAQVQGEGEFTYDRQRNAVGSYRYGDSHGNSREAEYSVADHQSASGEYKFGPTT</sequence>
<name>SEE1_MYCMD</name>
<feature type="signal peptide" evidence="1">
    <location>
        <begin position="1"/>
        <end position="21"/>
    </location>
</feature>
<feature type="chain" id="PRO_5002228015" description="Secreted effector protein See1" evidence="1">
    <location>
        <begin position="22"/>
        <end position="157"/>
    </location>
</feature>
<feature type="region of interest" description="Disordered" evidence="2">
    <location>
        <begin position="124"/>
        <end position="157"/>
    </location>
</feature>
<feature type="compositionally biased region" description="Basic and acidic residues" evidence="2">
    <location>
        <begin position="128"/>
        <end position="138"/>
    </location>
</feature>
<organism>
    <name type="scientific">Mycosarcoma maydis</name>
    <name type="common">Corn smut fungus</name>
    <name type="synonym">Ustilago maydis</name>
    <dbReference type="NCBI Taxonomy" id="5270"/>
    <lineage>
        <taxon>Eukaryota</taxon>
        <taxon>Fungi</taxon>
        <taxon>Dikarya</taxon>
        <taxon>Basidiomycota</taxon>
        <taxon>Ustilaginomycotina</taxon>
        <taxon>Ustilaginomycetes</taxon>
        <taxon>Ustilaginales</taxon>
        <taxon>Ustilaginaceae</taxon>
        <taxon>Mycosarcoma</taxon>
    </lineage>
</organism>
<protein>
    <recommendedName>
        <fullName evidence="5">Secreted effector protein See1</fullName>
    </recommendedName>
    <alternativeName>
        <fullName evidence="4">Seedling efficient effector protein 1</fullName>
    </alternativeName>
</protein>